<gene>
    <name type="primary">alr</name>
    <name type="ordered locus">Bpet3162</name>
</gene>
<dbReference type="EC" id="5.1.1.1" evidence="1"/>
<dbReference type="EMBL" id="AM902716">
    <property type="protein sequence ID" value="CAP43504.1"/>
    <property type="molecule type" value="Genomic_DNA"/>
</dbReference>
<dbReference type="SMR" id="A9IU63"/>
<dbReference type="STRING" id="94624.Bpet3162"/>
<dbReference type="KEGG" id="bpt:Bpet3162"/>
<dbReference type="eggNOG" id="COG0787">
    <property type="taxonomic scope" value="Bacteria"/>
</dbReference>
<dbReference type="UniPathway" id="UPA00042">
    <property type="reaction ID" value="UER00497"/>
</dbReference>
<dbReference type="Proteomes" id="UP000001225">
    <property type="component" value="Chromosome"/>
</dbReference>
<dbReference type="GO" id="GO:0005829">
    <property type="term" value="C:cytosol"/>
    <property type="evidence" value="ECO:0007669"/>
    <property type="project" value="TreeGrafter"/>
</dbReference>
<dbReference type="GO" id="GO:0008784">
    <property type="term" value="F:alanine racemase activity"/>
    <property type="evidence" value="ECO:0007669"/>
    <property type="project" value="UniProtKB-UniRule"/>
</dbReference>
<dbReference type="GO" id="GO:0030170">
    <property type="term" value="F:pyridoxal phosphate binding"/>
    <property type="evidence" value="ECO:0007669"/>
    <property type="project" value="UniProtKB-UniRule"/>
</dbReference>
<dbReference type="GO" id="GO:0030632">
    <property type="term" value="P:D-alanine biosynthetic process"/>
    <property type="evidence" value="ECO:0007669"/>
    <property type="project" value="UniProtKB-UniRule"/>
</dbReference>
<dbReference type="CDD" id="cd06827">
    <property type="entry name" value="PLPDE_III_AR_proteobact"/>
    <property type="match status" value="1"/>
</dbReference>
<dbReference type="FunFam" id="3.20.20.10:FF:000002">
    <property type="entry name" value="Alanine racemase"/>
    <property type="match status" value="1"/>
</dbReference>
<dbReference type="Gene3D" id="3.20.20.10">
    <property type="entry name" value="Alanine racemase"/>
    <property type="match status" value="1"/>
</dbReference>
<dbReference type="Gene3D" id="2.40.37.10">
    <property type="entry name" value="Lyase, Ornithine Decarboxylase, Chain A, domain 1"/>
    <property type="match status" value="1"/>
</dbReference>
<dbReference type="HAMAP" id="MF_01201">
    <property type="entry name" value="Ala_racemase"/>
    <property type="match status" value="1"/>
</dbReference>
<dbReference type="InterPro" id="IPR000821">
    <property type="entry name" value="Ala_racemase"/>
</dbReference>
<dbReference type="InterPro" id="IPR009006">
    <property type="entry name" value="Ala_racemase/Decarboxylase_C"/>
</dbReference>
<dbReference type="InterPro" id="IPR011079">
    <property type="entry name" value="Ala_racemase_C"/>
</dbReference>
<dbReference type="InterPro" id="IPR001608">
    <property type="entry name" value="Ala_racemase_N"/>
</dbReference>
<dbReference type="InterPro" id="IPR020622">
    <property type="entry name" value="Ala_racemase_pyridoxalP-BS"/>
</dbReference>
<dbReference type="InterPro" id="IPR029066">
    <property type="entry name" value="PLP-binding_barrel"/>
</dbReference>
<dbReference type="NCBIfam" id="TIGR00492">
    <property type="entry name" value="alr"/>
    <property type="match status" value="1"/>
</dbReference>
<dbReference type="PANTHER" id="PTHR30511">
    <property type="entry name" value="ALANINE RACEMASE"/>
    <property type="match status" value="1"/>
</dbReference>
<dbReference type="PANTHER" id="PTHR30511:SF0">
    <property type="entry name" value="ALANINE RACEMASE, CATABOLIC-RELATED"/>
    <property type="match status" value="1"/>
</dbReference>
<dbReference type="Pfam" id="PF00842">
    <property type="entry name" value="Ala_racemase_C"/>
    <property type="match status" value="1"/>
</dbReference>
<dbReference type="Pfam" id="PF01168">
    <property type="entry name" value="Ala_racemase_N"/>
    <property type="match status" value="1"/>
</dbReference>
<dbReference type="PRINTS" id="PR00992">
    <property type="entry name" value="ALARACEMASE"/>
</dbReference>
<dbReference type="SMART" id="SM01005">
    <property type="entry name" value="Ala_racemase_C"/>
    <property type="match status" value="1"/>
</dbReference>
<dbReference type="SUPFAM" id="SSF50621">
    <property type="entry name" value="Alanine racemase C-terminal domain-like"/>
    <property type="match status" value="1"/>
</dbReference>
<dbReference type="SUPFAM" id="SSF51419">
    <property type="entry name" value="PLP-binding barrel"/>
    <property type="match status" value="1"/>
</dbReference>
<dbReference type="PROSITE" id="PS00395">
    <property type="entry name" value="ALANINE_RACEMASE"/>
    <property type="match status" value="1"/>
</dbReference>
<accession>A9IU63</accession>
<evidence type="ECO:0000255" key="1">
    <source>
        <dbReference type="HAMAP-Rule" id="MF_01201"/>
    </source>
</evidence>
<organism>
    <name type="scientific">Bordetella petrii (strain ATCC BAA-461 / DSM 12804 / CCUG 43448)</name>
    <dbReference type="NCBI Taxonomy" id="340100"/>
    <lineage>
        <taxon>Bacteria</taxon>
        <taxon>Pseudomonadati</taxon>
        <taxon>Pseudomonadota</taxon>
        <taxon>Betaproteobacteria</taxon>
        <taxon>Burkholderiales</taxon>
        <taxon>Alcaligenaceae</taxon>
        <taxon>Bordetella</taxon>
    </lineage>
</organism>
<proteinExistence type="inferred from homology"/>
<keyword id="KW-0413">Isomerase</keyword>
<keyword id="KW-0663">Pyridoxal phosphate</keyword>
<name>ALR_BORPD</name>
<sequence>MPRPIHASISLAALAHNLDVVRRHLDQAAQAAGGAPPSIWAVIKANAYGHGIEAAVAGFSAAQGLAMLDLAEAVRCREAGWGGPILLLEGFFQPADLDLIDRYHLSATVHTREQLDMLAQARLSRRVDIMLKLNSGMNRLGFDPDAYGSAHARALQLREQGVVGAVGRMTHFACADGTPGVAGQLRVFQSVTQGLADGPVSVCNSAATLRYPEIAVAHGAQAHWVRPGICLYGASPFADADAASFGLRPAMSLRSQIIGVQDLPAGAEVGYGATFRAERPMRVGVVACGYADGYPRHAGTGTPVVVGGVRTRLVGRVSMDMLMVDLDPVPAAGIGTPVSLWGQDGPSVDEVAQAAGTIGYELLCALAPRVPVKRDS</sequence>
<reference key="1">
    <citation type="journal article" date="2008" name="BMC Genomics">
        <title>The missing link: Bordetella petrii is endowed with both the metabolic versatility of environmental bacteria and virulence traits of pathogenic Bordetellae.</title>
        <authorList>
            <person name="Gross R."/>
            <person name="Guzman C.A."/>
            <person name="Sebaihia M."/>
            <person name="Martin dos Santos V.A.P."/>
            <person name="Pieper D.H."/>
            <person name="Koebnik R."/>
            <person name="Lechner M."/>
            <person name="Bartels D."/>
            <person name="Buhrmester J."/>
            <person name="Choudhuri J.V."/>
            <person name="Ebensen T."/>
            <person name="Gaigalat L."/>
            <person name="Herrmann S."/>
            <person name="Khachane A.N."/>
            <person name="Larisch C."/>
            <person name="Link S."/>
            <person name="Linke B."/>
            <person name="Meyer F."/>
            <person name="Mormann S."/>
            <person name="Nakunst D."/>
            <person name="Rueckert C."/>
            <person name="Schneiker-Bekel S."/>
            <person name="Schulze K."/>
            <person name="Voerholter F.-J."/>
            <person name="Yevsa T."/>
            <person name="Engle J.T."/>
            <person name="Goldman W.E."/>
            <person name="Puehler A."/>
            <person name="Goebel U.B."/>
            <person name="Goesmann A."/>
            <person name="Bloecker H."/>
            <person name="Kaiser O."/>
            <person name="Martinez-Arias R."/>
        </authorList>
    </citation>
    <scope>NUCLEOTIDE SEQUENCE [LARGE SCALE GENOMIC DNA]</scope>
    <source>
        <strain>ATCC BAA-461 / DSM 12804 / CCUG 43448</strain>
    </source>
</reference>
<comment type="function">
    <text evidence="1">Catalyzes the interconversion of L-alanine and D-alanine. May also act on other amino acids.</text>
</comment>
<comment type="catalytic activity">
    <reaction evidence="1">
        <text>L-alanine = D-alanine</text>
        <dbReference type="Rhea" id="RHEA:20249"/>
        <dbReference type="ChEBI" id="CHEBI:57416"/>
        <dbReference type="ChEBI" id="CHEBI:57972"/>
        <dbReference type="EC" id="5.1.1.1"/>
    </reaction>
</comment>
<comment type="cofactor">
    <cofactor evidence="1">
        <name>pyridoxal 5'-phosphate</name>
        <dbReference type="ChEBI" id="CHEBI:597326"/>
    </cofactor>
</comment>
<comment type="pathway">
    <text evidence="1">Amino-acid biosynthesis; D-alanine biosynthesis; D-alanine from L-alanine: step 1/1.</text>
</comment>
<comment type="similarity">
    <text evidence="1">Belongs to the alanine racemase family.</text>
</comment>
<feature type="chain" id="PRO_1000138582" description="Alanine racemase">
    <location>
        <begin position="1"/>
        <end position="376"/>
    </location>
</feature>
<feature type="active site" description="Proton acceptor; specific for D-alanine" evidence="1">
    <location>
        <position position="44"/>
    </location>
</feature>
<feature type="active site" description="Proton acceptor; specific for L-alanine" evidence="1">
    <location>
        <position position="271"/>
    </location>
</feature>
<feature type="binding site" evidence="1">
    <location>
        <position position="139"/>
    </location>
    <ligand>
        <name>substrate</name>
    </ligand>
</feature>
<feature type="binding site" evidence="1">
    <location>
        <position position="319"/>
    </location>
    <ligand>
        <name>substrate</name>
    </ligand>
</feature>
<feature type="modified residue" description="N6-(pyridoxal phosphate)lysine" evidence="1">
    <location>
        <position position="44"/>
    </location>
</feature>
<protein>
    <recommendedName>
        <fullName evidence="1">Alanine racemase</fullName>
        <ecNumber evidence="1">5.1.1.1</ecNumber>
    </recommendedName>
</protein>